<dbReference type="EMBL" id="CP000802">
    <property type="protein sequence ID" value="ABV08386.1"/>
    <property type="molecule type" value="Genomic_DNA"/>
</dbReference>
<dbReference type="RefSeq" id="WP_001085926.1">
    <property type="nucleotide sequence ID" value="NC_009800.1"/>
</dbReference>
<dbReference type="SMR" id="A8A782"/>
<dbReference type="GeneID" id="93777911"/>
<dbReference type="KEGG" id="ecx:EcHS_A4216"/>
<dbReference type="HOGENOM" id="CLU_074237_2_0_6"/>
<dbReference type="GO" id="GO:0022625">
    <property type="term" value="C:cytosolic large ribosomal subunit"/>
    <property type="evidence" value="ECO:0007669"/>
    <property type="project" value="TreeGrafter"/>
</dbReference>
<dbReference type="GO" id="GO:0070180">
    <property type="term" value="F:large ribosomal subunit rRNA binding"/>
    <property type="evidence" value="ECO:0007669"/>
    <property type="project" value="UniProtKB-UniRule"/>
</dbReference>
<dbReference type="GO" id="GO:0003735">
    <property type="term" value="F:structural constituent of ribosome"/>
    <property type="evidence" value="ECO:0007669"/>
    <property type="project" value="InterPro"/>
</dbReference>
<dbReference type="GO" id="GO:0006412">
    <property type="term" value="P:translation"/>
    <property type="evidence" value="ECO:0007669"/>
    <property type="project" value="UniProtKB-UniRule"/>
</dbReference>
<dbReference type="CDD" id="cd00349">
    <property type="entry name" value="Ribosomal_L11"/>
    <property type="match status" value="1"/>
</dbReference>
<dbReference type="FunFam" id="1.10.10.250:FF:000001">
    <property type="entry name" value="50S ribosomal protein L11"/>
    <property type="match status" value="1"/>
</dbReference>
<dbReference type="FunFam" id="3.30.1550.10:FF:000001">
    <property type="entry name" value="50S ribosomal protein L11"/>
    <property type="match status" value="1"/>
</dbReference>
<dbReference type="Gene3D" id="1.10.10.250">
    <property type="entry name" value="Ribosomal protein L11, C-terminal domain"/>
    <property type="match status" value="1"/>
</dbReference>
<dbReference type="Gene3D" id="3.30.1550.10">
    <property type="entry name" value="Ribosomal protein L11/L12, N-terminal domain"/>
    <property type="match status" value="1"/>
</dbReference>
<dbReference type="HAMAP" id="MF_00736">
    <property type="entry name" value="Ribosomal_uL11"/>
    <property type="match status" value="1"/>
</dbReference>
<dbReference type="InterPro" id="IPR000911">
    <property type="entry name" value="Ribosomal_uL11"/>
</dbReference>
<dbReference type="InterPro" id="IPR006519">
    <property type="entry name" value="Ribosomal_uL11_bac-typ"/>
</dbReference>
<dbReference type="InterPro" id="IPR020783">
    <property type="entry name" value="Ribosomal_uL11_C"/>
</dbReference>
<dbReference type="InterPro" id="IPR036769">
    <property type="entry name" value="Ribosomal_uL11_C_sf"/>
</dbReference>
<dbReference type="InterPro" id="IPR020785">
    <property type="entry name" value="Ribosomal_uL11_CS"/>
</dbReference>
<dbReference type="InterPro" id="IPR020784">
    <property type="entry name" value="Ribosomal_uL11_N"/>
</dbReference>
<dbReference type="InterPro" id="IPR036796">
    <property type="entry name" value="Ribosomal_uL11_N_sf"/>
</dbReference>
<dbReference type="NCBIfam" id="TIGR01632">
    <property type="entry name" value="L11_bact"/>
    <property type="match status" value="1"/>
</dbReference>
<dbReference type="PANTHER" id="PTHR11661">
    <property type="entry name" value="60S RIBOSOMAL PROTEIN L12"/>
    <property type="match status" value="1"/>
</dbReference>
<dbReference type="PANTHER" id="PTHR11661:SF1">
    <property type="entry name" value="LARGE RIBOSOMAL SUBUNIT PROTEIN UL11M"/>
    <property type="match status" value="1"/>
</dbReference>
<dbReference type="Pfam" id="PF00298">
    <property type="entry name" value="Ribosomal_L11"/>
    <property type="match status" value="1"/>
</dbReference>
<dbReference type="Pfam" id="PF03946">
    <property type="entry name" value="Ribosomal_L11_N"/>
    <property type="match status" value="1"/>
</dbReference>
<dbReference type="SMART" id="SM00649">
    <property type="entry name" value="RL11"/>
    <property type="match status" value="1"/>
</dbReference>
<dbReference type="SUPFAM" id="SSF54747">
    <property type="entry name" value="Ribosomal L11/L12e N-terminal domain"/>
    <property type="match status" value="1"/>
</dbReference>
<dbReference type="SUPFAM" id="SSF46906">
    <property type="entry name" value="Ribosomal protein L11, C-terminal domain"/>
    <property type="match status" value="1"/>
</dbReference>
<dbReference type="PROSITE" id="PS00359">
    <property type="entry name" value="RIBOSOMAL_L11"/>
    <property type="match status" value="1"/>
</dbReference>
<comment type="function">
    <text evidence="1">Forms part of the ribosomal stalk which helps the ribosome interact with GTP-bound translation factors.</text>
</comment>
<comment type="subunit">
    <text evidence="1">Part of the ribosomal stalk of the 50S ribosomal subunit. Interacts with L10 and the large rRNA to form the base of the stalk. L10 forms an elongated spine to which L12 dimers bind in a sequential fashion forming a multimeric L10(L12)X complex.</text>
</comment>
<comment type="PTM">
    <text evidence="1">One or more lysine residues are methylated.</text>
</comment>
<comment type="similarity">
    <text evidence="1">Belongs to the universal ribosomal protein uL11 family.</text>
</comment>
<gene>
    <name evidence="1" type="primary">rplK</name>
    <name type="ordered locus">EcHS_A4216</name>
</gene>
<accession>A8A782</accession>
<organism>
    <name type="scientific">Escherichia coli O9:H4 (strain HS)</name>
    <dbReference type="NCBI Taxonomy" id="331112"/>
    <lineage>
        <taxon>Bacteria</taxon>
        <taxon>Pseudomonadati</taxon>
        <taxon>Pseudomonadota</taxon>
        <taxon>Gammaproteobacteria</taxon>
        <taxon>Enterobacterales</taxon>
        <taxon>Enterobacteriaceae</taxon>
        <taxon>Escherichia</taxon>
    </lineage>
</organism>
<name>RL11_ECOHS</name>
<feature type="chain" id="PRO_1000062135" description="Large ribosomal subunit protein uL11">
    <location>
        <begin position="1"/>
        <end position="142"/>
    </location>
</feature>
<sequence>MAKKVQAYVKLQVAAGMANPSPPVGPALGQQGVNIMEFCKAFNAKTDSIEKGLPIPVVITVYADRSFTFVTKTPPAAVLLKKAAGIKSGSGKPNKDKVGKISRAQLQEIAQTKAADMTGADIEAMTRSIEGTARSMGLVVED</sequence>
<evidence type="ECO:0000255" key="1">
    <source>
        <dbReference type="HAMAP-Rule" id="MF_00736"/>
    </source>
</evidence>
<evidence type="ECO:0000305" key="2"/>
<protein>
    <recommendedName>
        <fullName evidence="1">Large ribosomal subunit protein uL11</fullName>
    </recommendedName>
    <alternativeName>
        <fullName evidence="2">50S ribosomal protein L11</fullName>
    </alternativeName>
</protein>
<proteinExistence type="inferred from homology"/>
<reference key="1">
    <citation type="journal article" date="2008" name="J. Bacteriol.">
        <title>The pangenome structure of Escherichia coli: comparative genomic analysis of E. coli commensal and pathogenic isolates.</title>
        <authorList>
            <person name="Rasko D.A."/>
            <person name="Rosovitz M.J."/>
            <person name="Myers G.S.A."/>
            <person name="Mongodin E.F."/>
            <person name="Fricke W.F."/>
            <person name="Gajer P."/>
            <person name="Crabtree J."/>
            <person name="Sebaihia M."/>
            <person name="Thomson N.R."/>
            <person name="Chaudhuri R."/>
            <person name="Henderson I.R."/>
            <person name="Sperandio V."/>
            <person name="Ravel J."/>
        </authorList>
    </citation>
    <scope>NUCLEOTIDE SEQUENCE [LARGE SCALE GENOMIC DNA]</scope>
    <source>
        <strain>HS</strain>
    </source>
</reference>
<keyword id="KW-0488">Methylation</keyword>
<keyword id="KW-0687">Ribonucleoprotein</keyword>
<keyword id="KW-0689">Ribosomal protein</keyword>
<keyword id="KW-0694">RNA-binding</keyword>
<keyword id="KW-0699">rRNA-binding</keyword>